<organism>
    <name type="scientific">Oceanobacillus iheyensis (strain DSM 14371 / CIP 107618 / JCM 11309 / KCTC 3954 / HTE831)</name>
    <dbReference type="NCBI Taxonomy" id="221109"/>
    <lineage>
        <taxon>Bacteria</taxon>
        <taxon>Bacillati</taxon>
        <taxon>Bacillota</taxon>
        <taxon>Bacilli</taxon>
        <taxon>Bacillales</taxon>
        <taxon>Bacillaceae</taxon>
        <taxon>Oceanobacillus</taxon>
    </lineage>
</organism>
<proteinExistence type="inferred from homology"/>
<keyword id="KW-0012">Acyltransferase</keyword>
<keyword id="KW-1185">Reference proteome</keyword>
<keyword id="KW-0808">Transferase</keyword>
<gene>
    <name type="ordered locus">OB1458</name>
</gene>
<name>Y1458_OCEIH</name>
<dbReference type="EC" id="2.3.1.-"/>
<dbReference type="EMBL" id="BA000028">
    <property type="protein sequence ID" value="BAC13414.1"/>
    <property type="molecule type" value="Genomic_DNA"/>
</dbReference>
<dbReference type="RefSeq" id="WP_011065859.1">
    <property type="nucleotide sequence ID" value="NC_004193.1"/>
</dbReference>
<dbReference type="SMR" id="Q8ER57"/>
<dbReference type="STRING" id="221109.gene:10733698"/>
<dbReference type="KEGG" id="oih:OB1458"/>
<dbReference type="eggNOG" id="COG0454">
    <property type="taxonomic scope" value="Bacteria"/>
</dbReference>
<dbReference type="HOGENOM" id="CLU_136634_0_0_9"/>
<dbReference type="OrthoDB" id="2242710at2"/>
<dbReference type="PhylomeDB" id="Q8ER57"/>
<dbReference type="Proteomes" id="UP000000822">
    <property type="component" value="Chromosome"/>
</dbReference>
<dbReference type="GO" id="GO:0016747">
    <property type="term" value="F:acyltransferase activity, transferring groups other than amino-acyl groups"/>
    <property type="evidence" value="ECO:0007669"/>
    <property type="project" value="UniProtKB-UniRule"/>
</dbReference>
<dbReference type="CDD" id="cd04301">
    <property type="entry name" value="NAT_SF"/>
    <property type="match status" value="1"/>
</dbReference>
<dbReference type="Gene3D" id="3.40.630.30">
    <property type="match status" value="1"/>
</dbReference>
<dbReference type="HAMAP" id="MF_00824">
    <property type="entry name" value="Acetyltransf_YlbP"/>
    <property type="match status" value="1"/>
</dbReference>
<dbReference type="InterPro" id="IPR016181">
    <property type="entry name" value="Acyl_CoA_acyltransferase"/>
</dbReference>
<dbReference type="InterPro" id="IPR000182">
    <property type="entry name" value="GNAT_dom"/>
</dbReference>
<dbReference type="InterPro" id="IPR017274">
    <property type="entry name" value="YlbP"/>
</dbReference>
<dbReference type="NCBIfam" id="NF010241">
    <property type="entry name" value="PRK13688.1"/>
    <property type="match status" value="1"/>
</dbReference>
<dbReference type="Pfam" id="PF00583">
    <property type="entry name" value="Acetyltransf_1"/>
    <property type="match status" value="1"/>
</dbReference>
<dbReference type="PIRSF" id="PIRSF037732">
    <property type="entry name" value="YlbP_prd"/>
    <property type="match status" value="1"/>
</dbReference>
<dbReference type="SUPFAM" id="SSF55729">
    <property type="entry name" value="Acyl-CoA N-acyltransferases (Nat)"/>
    <property type="match status" value="1"/>
</dbReference>
<dbReference type="PROSITE" id="PS51186">
    <property type="entry name" value="GNAT"/>
    <property type="match status" value="1"/>
</dbReference>
<reference key="1">
    <citation type="journal article" date="2002" name="Nucleic Acids Res.">
        <title>Genome sequence of Oceanobacillus iheyensis isolated from the Iheya Ridge and its unexpected adaptive capabilities to extreme environments.</title>
        <authorList>
            <person name="Takami H."/>
            <person name="Takaki Y."/>
            <person name="Uchiyama I."/>
        </authorList>
    </citation>
    <scope>NUCLEOTIDE SEQUENCE [LARGE SCALE GENOMIC DNA]</scope>
    <source>
        <strain>DSM 14371 / CIP 107618 / JCM 11309 / KCTC 3954 / HTE831</strain>
    </source>
</reference>
<accession>Q8ER57</accession>
<sequence length="160" mass="19155">MENVKVENLLINYKTLEKFKRFREYGNQELTMMEDLENNIIENDSKSPFYGIYFGNNLIARMSLYEVSKQYDYYFEPSQDYLTLWKLEVLPDYQNKGYGEVLVNFAKSFELPIKTNPRINSHGFWEKMGFIKAHYEMERDLGENPLIWLPEGVKEKDMKS</sequence>
<feature type="chain" id="PRO_0000232480" description="Uncharacterized N-acetyltransferase OB1458">
    <location>
        <begin position="1"/>
        <end position="160"/>
    </location>
</feature>
<feature type="domain" description="N-acetyltransferase">
    <location>
        <begin position="9"/>
        <end position="151"/>
    </location>
</feature>
<protein>
    <recommendedName>
        <fullName>Uncharacterized N-acetyltransferase OB1458</fullName>
        <ecNumber>2.3.1.-</ecNumber>
    </recommendedName>
</protein>